<accession>P29958</accession>
<gene>
    <name type="primary">aac</name>
</gene>
<proteinExistence type="evidence at protein level"/>
<protein>
    <recommendedName>
        <fullName>Aculeacin-A acylase</fullName>
        <ecNumber>3.5.1.-</ecNumber>
    </recommendedName>
    <component>
        <recommendedName>
            <fullName>Aculeacin-A acylase small subunit</fullName>
        </recommendedName>
    </component>
    <component>
        <recommendedName>
            <fullName>Aculeacin-A acylase large subunit</fullName>
        </recommendedName>
    </component>
</protein>
<sequence>MTSSYMRLKAAAIAFGVIVATAAVPSPASGREHDGGYAALIRRASYGVPHITADDFGSLGFGVGYVQAEDNICVIAESVVTANGERSRWFGATGPDDADVRTTSSTQAIDDRVAERLLEGPRDGVRAPCDDVRDQMRGFVAGYNHFLRRTGVHRLTDPACRGKAWVRPLSEIDLWRTSWDSMVRAGSGALLDGIVAATPPTAAGPASAPEAPDAAAIAAALDGTSAGIGSNAYGLGAQATVNGSGMVLANPHFPWQGAERFYRMHLKVPGRYDVEGAALIGDPIIEIGHNRTVAWSHTVSTARRFVWHRLSLVPGDPTSYYVDGRPERMRARTVTVQTGSGPVSRTFHDTRYGPVAVVPGTFDWTPATAYAITDVNAGNNRAFDGWLRMGQAKDVRALKAVLDRHQFLPWVNVIAADARGEALYGDHSVVPRVTGALAAACIPAPFQPLYASSGQAVLDGSRSDCALGADPDAAVPGILGPASLPVRFRDDYVTNSNDSHWLASPAAPLEGFPRILGNERTPRSLRTRLGLDQIQQRLAGTDGLPGKGFTTARLWQVMFGNRMHGAELVRDDLVALCRRQPTATASNGAIVDLTAACTALSRFDERADLDSRGAHLFTEFLAGGIRFADTFEVTDPVRTPAPFWNTTDPRVRTALADACNGSPASPSTRSVGDIHTDSRGERRIPIHGGRGEAGTFNVITNPLVPGVGYPQVVHGTSFVMAVELGPHGPSGRQILTYAQSTNPNSPWYADQTVLYSRKGWDTIKYTEAQIAADPNLRVYRVAQRGR</sequence>
<evidence type="ECO:0000250" key="1"/>
<evidence type="ECO:0000255" key="2"/>
<evidence type="ECO:0000256" key="3">
    <source>
        <dbReference type="SAM" id="MobiDB-lite"/>
    </source>
</evidence>
<evidence type="ECO:0000269" key="4">
    <source>
    </source>
</evidence>
<evidence type="ECO:0000305" key="5"/>
<keyword id="KW-0903">Direct protein sequencing</keyword>
<keyword id="KW-0378">Hydrolase</keyword>
<keyword id="KW-0964">Secreted</keyword>
<keyword id="KW-0732">Signal</keyword>
<keyword id="KW-0865">Zymogen</keyword>
<name>AAC_ACTUT</name>
<dbReference type="EC" id="3.5.1.-"/>
<dbReference type="EMBL" id="D10610">
    <property type="protein sequence ID" value="BAA01465.1"/>
    <property type="molecule type" value="Genomic_DNA"/>
</dbReference>
<dbReference type="PIR" id="JC1298">
    <property type="entry name" value="JC1298"/>
</dbReference>
<dbReference type="SMR" id="P29958"/>
<dbReference type="STRING" id="1869.MB27_08700"/>
<dbReference type="MEROPS" id="S45.005"/>
<dbReference type="eggNOG" id="COG2366">
    <property type="taxonomic scope" value="Bacteria"/>
</dbReference>
<dbReference type="GO" id="GO:0005576">
    <property type="term" value="C:extracellular region"/>
    <property type="evidence" value="ECO:0007669"/>
    <property type="project" value="UniProtKB-SubCell"/>
</dbReference>
<dbReference type="GO" id="GO:0016811">
    <property type="term" value="F:hydrolase activity, acting on carbon-nitrogen (but not peptide) bonds, in linear amides"/>
    <property type="evidence" value="ECO:0007669"/>
    <property type="project" value="InterPro"/>
</dbReference>
<dbReference type="GO" id="GO:0017000">
    <property type="term" value="P:antibiotic biosynthetic process"/>
    <property type="evidence" value="ECO:0007669"/>
    <property type="project" value="InterPro"/>
</dbReference>
<dbReference type="CDD" id="cd01936">
    <property type="entry name" value="Ntn_CA"/>
    <property type="match status" value="1"/>
</dbReference>
<dbReference type="Gene3D" id="1.10.1400.10">
    <property type="match status" value="1"/>
</dbReference>
<dbReference type="Gene3D" id="2.30.120.10">
    <property type="match status" value="1"/>
</dbReference>
<dbReference type="Gene3D" id="3.60.20.10">
    <property type="entry name" value="Glutamine Phosphoribosylpyrophosphate, subunit 1, domain 1"/>
    <property type="match status" value="1"/>
</dbReference>
<dbReference type="Gene3D" id="1.10.439.10">
    <property type="entry name" value="Penicillin Amidohydrolase, domain 1"/>
    <property type="match status" value="1"/>
</dbReference>
<dbReference type="InterPro" id="IPR029055">
    <property type="entry name" value="Ntn_hydrolases_N"/>
</dbReference>
<dbReference type="InterPro" id="IPR043147">
    <property type="entry name" value="Penicillin_amidase_A-knob"/>
</dbReference>
<dbReference type="InterPro" id="IPR023343">
    <property type="entry name" value="Penicillin_amidase_dom1"/>
</dbReference>
<dbReference type="InterPro" id="IPR043146">
    <property type="entry name" value="Penicillin_amidase_N_B-knob"/>
</dbReference>
<dbReference type="InterPro" id="IPR002692">
    <property type="entry name" value="S45"/>
</dbReference>
<dbReference type="PANTHER" id="PTHR34218:SF3">
    <property type="entry name" value="ACYL-HOMOSERINE LACTONE ACYLASE PVDQ"/>
    <property type="match status" value="1"/>
</dbReference>
<dbReference type="PANTHER" id="PTHR34218">
    <property type="entry name" value="PEPTIDASE S45 PENICILLIN AMIDASE"/>
    <property type="match status" value="1"/>
</dbReference>
<dbReference type="Pfam" id="PF01804">
    <property type="entry name" value="Penicil_amidase"/>
    <property type="match status" value="1"/>
</dbReference>
<dbReference type="SUPFAM" id="SSF56235">
    <property type="entry name" value="N-terminal nucleophile aminohydrolases (Ntn hydrolases)"/>
    <property type="match status" value="1"/>
</dbReference>
<organism>
    <name type="scientific">Actinoplanes utahensis</name>
    <dbReference type="NCBI Taxonomy" id="1869"/>
    <lineage>
        <taxon>Bacteria</taxon>
        <taxon>Bacillati</taxon>
        <taxon>Actinomycetota</taxon>
        <taxon>Actinomycetes</taxon>
        <taxon>Micromonosporales</taxon>
        <taxon>Micromonosporaceae</taxon>
        <taxon>Actinoplanes</taxon>
    </lineage>
</organism>
<reference key="1">
    <citation type="journal article" date="1992" name="Gene">
        <title>Cloning and sequencing of the aculeacin A acylase-encoding gene from Actinoplanes utahensis and expression in Streptomyces lividans.</title>
        <authorList>
            <person name="Inokoshi J."/>
            <person name="Takeshima H."/>
            <person name="Ikeda H."/>
            <person name="Omura S."/>
        </authorList>
    </citation>
    <scope>NUCLEOTIDE SEQUENCE [GENOMIC DNA]</scope>
    <scope>PROTEIN SEQUENCE OF 35-53; 212-214 AND 230-249</scope>
    <source>
        <strain>NRRL 12052</strain>
    </source>
</reference>
<comment type="function">
    <text>Catalyzes the hydrolysis of the palmitoyl moiety of the antifungal antibiotic, aculeacin-A, giving a hexapeptide moiety and a long chain fatty acid.</text>
</comment>
<comment type="subunit">
    <text>Heterodimer of a small subunit and a large subunit processed from the same precursor.</text>
</comment>
<comment type="subcellular location">
    <subcellularLocation>
        <location>Secreted</location>
    </subcellularLocation>
</comment>
<comment type="similarity">
    <text evidence="5">Belongs to the peptidase S45 family.</text>
</comment>
<feature type="signal peptide" evidence="2">
    <location>
        <begin position="1"/>
        <end position="22"/>
    </location>
</feature>
<feature type="propeptide" id="PRO_0000020598" evidence="4">
    <location>
        <begin position="23"/>
        <end position="34"/>
    </location>
</feature>
<feature type="chain" id="PRO_0000253350" description="Aculeacin-A acylase">
    <location>
        <begin position="35"/>
        <end position="786"/>
    </location>
</feature>
<feature type="chain" id="PRO_0000020599" description="Aculeacin-A acylase small subunit">
    <location>
        <begin position="35"/>
        <end position="214"/>
    </location>
</feature>
<feature type="propeptide" id="PRO_0000020600" description="Spacer peptide" evidence="4">
    <location>
        <begin position="215"/>
        <end position="229"/>
    </location>
</feature>
<feature type="chain" id="PRO_0000020601" description="Aculeacin-A acylase large subunit">
    <location>
        <begin position="230"/>
        <end position="786"/>
    </location>
</feature>
<feature type="region of interest" description="Substrate-binding" evidence="2">
    <location>
        <begin position="35"/>
        <end position="130"/>
    </location>
</feature>
<feature type="region of interest" description="Possible recognition-sequence of an AAC processing enzyme">
    <location>
        <begin position="220"/>
        <end position="239"/>
    </location>
</feature>
<feature type="region of interest" description="Disordered" evidence="3">
    <location>
        <begin position="658"/>
        <end position="689"/>
    </location>
</feature>
<feature type="compositionally biased region" description="Basic and acidic residues" evidence="3">
    <location>
        <begin position="672"/>
        <end position="684"/>
    </location>
</feature>
<feature type="active site" description="Nucleophile" evidence="1">
    <location>
        <position position="230"/>
    </location>
</feature>